<organism>
    <name type="scientific">Yersinia pestis (strain Pestoides F)</name>
    <dbReference type="NCBI Taxonomy" id="386656"/>
    <lineage>
        <taxon>Bacteria</taxon>
        <taxon>Pseudomonadati</taxon>
        <taxon>Pseudomonadota</taxon>
        <taxon>Gammaproteobacteria</taxon>
        <taxon>Enterobacterales</taxon>
        <taxon>Yersiniaceae</taxon>
        <taxon>Yersinia</taxon>
    </lineage>
</organism>
<evidence type="ECO:0000255" key="1">
    <source>
        <dbReference type="HAMAP-Rule" id="MF_00780"/>
    </source>
</evidence>
<gene>
    <name type="ordered locus">YPDSF_0829</name>
</gene>
<name>Y829_YERPP</name>
<keyword id="KW-0574">Periplasm</keyword>
<keyword id="KW-0732">Signal</keyword>
<accession>A4TIX3</accession>
<reference key="1">
    <citation type="submission" date="2007-02" db="EMBL/GenBank/DDBJ databases">
        <title>Complete sequence of chromosome of Yersinia pestis Pestoides F.</title>
        <authorList>
            <consortium name="US DOE Joint Genome Institute"/>
            <person name="Copeland A."/>
            <person name="Lucas S."/>
            <person name="Lapidus A."/>
            <person name="Barry K."/>
            <person name="Detter J.C."/>
            <person name="Glavina del Rio T."/>
            <person name="Hammon N."/>
            <person name="Israni S."/>
            <person name="Dalin E."/>
            <person name="Tice H."/>
            <person name="Pitluck S."/>
            <person name="Di Bartolo G."/>
            <person name="Chain P."/>
            <person name="Malfatti S."/>
            <person name="Shin M."/>
            <person name="Vergez L."/>
            <person name="Schmutz J."/>
            <person name="Larimer F."/>
            <person name="Land M."/>
            <person name="Hauser L."/>
            <person name="Worsham P."/>
            <person name="Chu M."/>
            <person name="Bearden S."/>
            <person name="Garcia E."/>
            <person name="Richardson P."/>
        </authorList>
    </citation>
    <scope>NUCLEOTIDE SEQUENCE [LARGE SCALE GENOMIC DNA]</scope>
    <source>
        <strain>Pestoides F</strain>
    </source>
</reference>
<feature type="signal peptide" evidence="1">
    <location>
        <begin position="1"/>
        <end position="23"/>
    </location>
</feature>
<feature type="chain" id="PRO_5000236620" description="UPF0312 protein YPDSF_0829">
    <location>
        <begin position="24"/>
        <end position="192"/>
    </location>
</feature>
<comment type="subcellular location">
    <subcellularLocation>
        <location evidence="1">Periplasm</location>
    </subcellularLocation>
</comment>
<comment type="similarity">
    <text evidence="1">Belongs to the UPF0312 family. Type 1 subfamily.</text>
</comment>
<protein>
    <recommendedName>
        <fullName evidence="1">UPF0312 protein YPDSF_0829</fullName>
    </recommendedName>
</protein>
<proteinExistence type="inferred from homology"/>
<sequence length="192" mass="20909">MINKTLLGLSLGALMFTAGSAVAADYKIDKEGQHAFIEFRIKHLGYSWLYGSFNDFDGSFTFDDKNPAADKVNVVINTNSVDTNHAERDKHLRGKSFLNVAKFPQATFESTEVKKNGDGYSVIGNLTLNGVTKPVTLESKLTGQGNDPWGGYRAGFEANGNIKLKDFNITTDLGPASQEVELILSVEGVQVK</sequence>
<dbReference type="EMBL" id="CP000668">
    <property type="protein sequence ID" value="ABP39235.1"/>
    <property type="molecule type" value="Genomic_DNA"/>
</dbReference>
<dbReference type="RefSeq" id="WP_002211011.1">
    <property type="nucleotide sequence ID" value="NZ_CP009715.1"/>
</dbReference>
<dbReference type="SMR" id="A4TIX3"/>
<dbReference type="KEGG" id="ypp:YPDSF_0829"/>
<dbReference type="PATRIC" id="fig|386656.14.peg.3029"/>
<dbReference type="GO" id="GO:0042597">
    <property type="term" value="C:periplasmic space"/>
    <property type="evidence" value="ECO:0007669"/>
    <property type="project" value="UniProtKB-SubCell"/>
</dbReference>
<dbReference type="Gene3D" id="2.40.128.110">
    <property type="entry name" value="Lipid/polyisoprenoid-binding, YceI-like"/>
    <property type="match status" value="1"/>
</dbReference>
<dbReference type="HAMAP" id="MF_00780">
    <property type="entry name" value="UPF0312"/>
    <property type="match status" value="1"/>
</dbReference>
<dbReference type="InterPro" id="IPR007372">
    <property type="entry name" value="Lipid/polyisoprenoid-bd_YceI"/>
</dbReference>
<dbReference type="InterPro" id="IPR036761">
    <property type="entry name" value="TTHA0802/YceI-like_sf"/>
</dbReference>
<dbReference type="InterPro" id="IPR023480">
    <property type="entry name" value="UPF0312/YceI"/>
</dbReference>
<dbReference type="NCBIfam" id="NF002994">
    <property type="entry name" value="PRK03757.1"/>
    <property type="match status" value="1"/>
</dbReference>
<dbReference type="PANTHER" id="PTHR34406">
    <property type="entry name" value="PROTEIN YCEI"/>
    <property type="match status" value="1"/>
</dbReference>
<dbReference type="PANTHER" id="PTHR34406:SF1">
    <property type="entry name" value="PROTEIN YCEI"/>
    <property type="match status" value="1"/>
</dbReference>
<dbReference type="Pfam" id="PF04264">
    <property type="entry name" value="YceI"/>
    <property type="match status" value="1"/>
</dbReference>
<dbReference type="SMART" id="SM00867">
    <property type="entry name" value="YceI"/>
    <property type="match status" value="1"/>
</dbReference>
<dbReference type="SUPFAM" id="SSF101874">
    <property type="entry name" value="YceI-like"/>
    <property type="match status" value="1"/>
</dbReference>